<comment type="function">
    <text evidence="1">Digests double-stranded RNA. Involved in the processing of primary rRNA transcript to yield the immediate precursors to the large and small rRNAs (23S and 16S). Processes some mRNAs, and tRNAs when they are encoded in the rRNA operon. Processes pre-crRNA and tracrRNA of type II CRISPR loci if present in the organism.</text>
</comment>
<comment type="catalytic activity">
    <reaction evidence="1">
        <text>Endonucleolytic cleavage to 5'-phosphomonoester.</text>
        <dbReference type="EC" id="3.1.26.3"/>
    </reaction>
</comment>
<comment type="cofactor">
    <cofactor evidence="1">
        <name>Mg(2+)</name>
        <dbReference type="ChEBI" id="CHEBI:18420"/>
    </cofactor>
</comment>
<comment type="subunit">
    <text evidence="1">Homodimer.</text>
</comment>
<comment type="subcellular location">
    <subcellularLocation>
        <location evidence="1">Cytoplasm</location>
    </subcellularLocation>
</comment>
<comment type="similarity">
    <text evidence="1">Belongs to the ribonuclease III family.</text>
</comment>
<reference key="1">
    <citation type="journal article" date="2006" name="Nat. Biotechnol.">
        <title>Complete genome sequence of the entomopathogenic and metabolically versatile soil bacterium Pseudomonas entomophila.</title>
        <authorList>
            <person name="Vodovar N."/>
            <person name="Vallenet D."/>
            <person name="Cruveiller S."/>
            <person name="Rouy Z."/>
            <person name="Barbe V."/>
            <person name="Acosta C."/>
            <person name="Cattolico L."/>
            <person name="Jubin C."/>
            <person name="Lajus A."/>
            <person name="Segurens B."/>
            <person name="Vacherie B."/>
            <person name="Wincker P."/>
            <person name="Weissenbach J."/>
            <person name="Lemaitre B."/>
            <person name="Medigue C."/>
            <person name="Boccard F."/>
        </authorList>
    </citation>
    <scope>NUCLEOTIDE SEQUENCE [LARGE SCALE GENOMIC DNA]</scope>
    <source>
        <strain>L48</strain>
    </source>
</reference>
<evidence type="ECO:0000255" key="1">
    <source>
        <dbReference type="HAMAP-Rule" id="MF_00104"/>
    </source>
</evidence>
<sequence>MSASLDRLERKLGYTFKNQDQMLLALTHRSYAGRNNERLEFLGDAILNFVVGEALFERFPQAREGQLSRLRARLVKGETLARLARGFDLGDYLRLGSGELKSGGFRRESILADALEALIGAIYQDADMQTARERILAWLTDEFDGLTLVDTNKDPKTRLQEFLQSRACELPRYEVVDIQGEPHCRTFFVECEVVLLNKKSRGQGVSRRIAEQVAAAAALIALGVENGND</sequence>
<name>RNC_PSEE4</name>
<accession>Q1I5V8</accession>
<organism>
    <name type="scientific">Pseudomonas entomophila (strain L48)</name>
    <dbReference type="NCBI Taxonomy" id="384676"/>
    <lineage>
        <taxon>Bacteria</taxon>
        <taxon>Pseudomonadati</taxon>
        <taxon>Pseudomonadota</taxon>
        <taxon>Gammaproteobacteria</taxon>
        <taxon>Pseudomonadales</taxon>
        <taxon>Pseudomonadaceae</taxon>
        <taxon>Pseudomonas</taxon>
    </lineage>
</organism>
<feature type="chain" id="PRO_1000075788" description="Ribonuclease 3">
    <location>
        <begin position="1"/>
        <end position="229"/>
    </location>
</feature>
<feature type="domain" description="RNase III" evidence="1">
    <location>
        <begin position="5"/>
        <end position="127"/>
    </location>
</feature>
<feature type="domain" description="DRBM" evidence="1">
    <location>
        <begin position="154"/>
        <end position="224"/>
    </location>
</feature>
<feature type="active site" evidence="1">
    <location>
        <position position="44"/>
    </location>
</feature>
<feature type="active site" evidence="1">
    <location>
        <position position="116"/>
    </location>
</feature>
<feature type="binding site" evidence="1">
    <location>
        <position position="40"/>
    </location>
    <ligand>
        <name>Mg(2+)</name>
        <dbReference type="ChEBI" id="CHEBI:18420"/>
    </ligand>
</feature>
<feature type="binding site" evidence="1">
    <location>
        <position position="113"/>
    </location>
    <ligand>
        <name>Mg(2+)</name>
        <dbReference type="ChEBI" id="CHEBI:18420"/>
    </ligand>
</feature>
<feature type="binding site" evidence="1">
    <location>
        <position position="116"/>
    </location>
    <ligand>
        <name>Mg(2+)</name>
        <dbReference type="ChEBI" id="CHEBI:18420"/>
    </ligand>
</feature>
<gene>
    <name evidence="1" type="primary">rnc</name>
    <name type="ordered locus">PSEEN4290</name>
</gene>
<keyword id="KW-0963">Cytoplasm</keyword>
<keyword id="KW-0255">Endonuclease</keyword>
<keyword id="KW-0378">Hydrolase</keyword>
<keyword id="KW-0460">Magnesium</keyword>
<keyword id="KW-0479">Metal-binding</keyword>
<keyword id="KW-0507">mRNA processing</keyword>
<keyword id="KW-0540">Nuclease</keyword>
<keyword id="KW-0694">RNA-binding</keyword>
<keyword id="KW-0698">rRNA processing</keyword>
<keyword id="KW-0699">rRNA-binding</keyword>
<keyword id="KW-0819">tRNA processing</keyword>
<protein>
    <recommendedName>
        <fullName evidence="1">Ribonuclease 3</fullName>
        <ecNumber evidence="1">3.1.26.3</ecNumber>
    </recommendedName>
    <alternativeName>
        <fullName evidence="1">Ribonuclease III</fullName>
        <shortName evidence="1">RNase III</shortName>
    </alternativeName>
</protein>
<dbReference type="EC" id="3.1.26.3" evidence="1"/>
<dbReference type="EMBL" id="CT573326">
    <property type="protein sequence ID" value="CAK16977.1"/>
    <property type="molecule type" value="Genomic_DNA"/>
</dbReference>
<dbReference type="RefSeq" id="WP_011535348.1">
    <property type="nucleotide sequence ID" value="NC_008027.1"/>
</dbReference>
<dbReference type="SMR" id="Q1I5V8"/>
<dbReference type="STRING" id="384676.PSEEN4290"/>
<dbReference type="GeneID" id="32807295"/>
<dbReference type="KEGG" id="pen:PSEEN4290"/>
<dbReference type="eggNOG" id="COG0571">
    <property type="taxonomic scope" value="Bacteria"/>
</dbReference>
<dbReference type="HOGENOM" id="CLU_000907_1_1_6"/>
<dbReference type="OrthoDB" id="9805026at2"/>
<dbReference type="Proteomes" id="UP000000658">
    <property type="component" value="Chromosome"/>
</dbReference>
<dbReference type="GO" id="GO:0005737">
    <property type="term" value="C:cytoplasm"/>
    <property type="evidence" value="ECO:0007669"/>
    <property type="project" value="UniProtKB-SubCell"/>
</dbReference>
<dbReference type="GO" id="GO:0046872">
    <property type="term" value="F:metal ion binding"/>
    <property type="evidence" value="ECO:0007669"/>
    <property type="project" value="UniProtKB-KW"/>
</dbReference>
<dbReference type="GO" id="GO:0004525">
    <property type="term" value="F:ribonuclease III activity"/>
    <property type="evidence" value="ECO:0007669"/>
    <property type="project" value="UniProtKB-UniRule"/>
</dbReference>
<dbReference type="GO" id="GO:0019843">
    <property type="term" value="F:rRNA binding"/>
    <property type="evidence" value="ECO:0007669"/>
    <property type="project" value="UniProtKB-KW"/>
</dbReference>
<dbReference type="GO" id="GO:0006397">
    <property type="term" value="P:mRNA processing"/>
    <property type="evidence" value="ECO:0007669"/>
    <property type="project" value="UniProtKB-UniRule"/>
</dbReference>
<dbReference type="GO" id="GO:0006364">
    <property type="term" value="P:rRNA processing"/>
    <property type="evidence" value="ECO:0007669"/>
    <property type="project" value="UniProtKB-UniRule"/>
</dbReference>
<dbReference type="GO" id="GO:0008033">
    <property type="term" value="P:tRNA processing"/>
    <property type="evidence" value="ECO:0007669"/>
    <property type="project" value="UniProtKB-KW"/>
</dbReference>
<dbReference type="CDD" id="cd10845">
    <property type="entry name" value="DSRM_RNAse_III_family"/>
    <property type="match status" value="1"/>
</dbReference>
<dbReference type="CDD" id="cd00593">
    <property type="entry name" value="RIBOc"/>
    <property type="match status" value="1"/>
</dbReference>
<dbReference type="FunFam" id="1.10.1520.10:FF:000001">
    <property type="entry name" value="Ribonuclease 3"/>
    <property type="match status" value="1"/>
</dbReference>
<dbReference type="Gene3D" id="3.30.160.20">
    <property type="match status" value="1"/>
</dbReference>
<dbReference type="Gene3D" id="1.10.1520.10">
    <property type="entry name" value="Ribonuclease III domain"/>
    <property type="match status" value="1"/>
</dbReference>
<dbReference type="HAMAP" id="MF_00104">
    <property type="entry name" value="RNase_III"/>
    <property type="match status" value="1"/>
</dbReference>
<dbReference type="InterPro" id="IPR014720">
    <property type="entry name" value="dsRBD_dom"/>
</dbReference>
<dbReference type="InterPro" id="IPR011907">
    <property type="entry name" value="RNase_III"/>
</dbReference>
<dbReference type="InterPro" id="IPR000999">
    <property type="entry name" value="RNase_III_dom"/>
</dbReference>
<dbReference type="InterPro" id="IPR036389">
    <property type="entry name" value="RNase_III_sf"/>
</dbReference>
<dbReference type="NCBIfam" id="TIGR02191">
    <property type="entry name" value="RNaseIII"/>
    <property type="match status" value="1"/>
</dbReference>
<dbReference type="PANTHER" id="PTHR14950">
    <property type="entry name" value="DICER-RELATED"/>
    <property type="match status" value="1"/>
</dbReference>
<dbReference type="PANTHER" id="PTHR14950:SF37">
    <property type="entry name" value="ENDORIBONUCLEASE DICER"/>
    <property type="match status" value="1"/>
</dbReference>
<dbReference type="Pfam" id="PF00035">
    <property type="entry name" value="dsrm"/>
    <property type="match status" value="1"/>
</dbReference>
<dbReference type="Pfam" id="PF14622">
    <property type="entry name" value="Ribonucleas_3_3"/>
    <property type="match status" value="1"/>
</dbReference>
<dbReference type="SMART" id="SM00358">
    <property type="entry name" value="DSRM"/>
    <property type="match status" value="1"/>
</dbReference>
<dbReference type="SMART" id="SM00535">
    <property type="entry name" value="RIBOc"/>
    <property type="match status" value="1"/>
</dbReference>
<dbReference type="SUPFAM" id="SSF54768">
    <property type="entry name" value="dsRNA-binding domain-like"/>
    <property type="match status" value="1"/>
</dbReference>
<dbReference type="SUPFAM" id="SSF69065">
    <property type="entry name" value="RNase III domain-like"/>
    <property type="match status" value="1"/>
</dbReference>
<dbReference type="PROSITE" id="PS50137">
    <property type="entry name" value="DS_RBD"/>
    <property type="match status" value="1"/>
</dbReference>
<dbReference type="PROSITE" id="PS00517">
    <property type="entry name" value="RNASE_3_1"/>
    <property type="match status" value="1"/>
</dbReference>
<dbReference type="PROSITE" id="PS50142">
    <property type="entry name" value="RNASE_3_2"/>
    <property type="match status" value="1"/>
</dbReference>
<proteinExistence type="inferred from homology"/>